<sequence length="555" mass="62321">MTNPTNCPIWHDLSAHYQEVLPLQMRDMFTKDGRRFEKFSLEAEGLLLDYSKHRITDETLPLLFKLARDSKVEEWRDRMFAGEKINFTENRAVLHTALRNRSNTPVYVDGKDVMPDVNRVLAQMRKFSTSIRSGEWKGYSGKRITDVVNIGIGGSDLGPVMVCGALKPYAQAGLNAHFVSNIDGTHLAQTLERCDPETTLFIVASKTFTTQETMTNARSARSWFLQAAKDEAHVAKHFVAISTNADEVGKFGIDAANMFEFWDWVGGRYSLWSAIGLSIAIYIGMDHFEELLQGGYEIDRHFKNAPLEQNIPVIMALLGIWYNNFFGADSLAILPYDQGLARFPAYLQQADMESNGKFVARDGRIVQCTTGPIIWGEAGTNGQHAFYQLIHQGNRLIPCDFMMPLQSHYSMGKNGNEHHLILLANCFAQTSALMQGKTLDEAKAELVAQGLTGEALETLLPHKVFEGNRPSTTILFDKLTPKTLGKLIAIYEHKIFVQGIIWNINSFDQWGVEYGKQIAKKILPQLSEDQASTEYDSSTNGLMNYFKSRTQSSGT</sequence>
<comment type="function">
    <text evidence="1">Catalyzes the reversible isomerization of glucose-6-phosphate to fructose-6-phosphate.</text>
</comment>
<comment type="catalytic activity">
    <reaction evidence="1">
        <text>alpha-D-glucose 6-phosphate = beta-D-fructose 6-phosphate</text>
        <dbReference type="Rhea" id="RHEA:11816"/>
        <dbReference type="ChEBI" id="CHEBI:57634"/>
        <dbReference type="ChEBI" id="CHEBI:58225"/>
        <dbReference type="EC" id="5.3.1.9"/>
    </reaction>
</comment>
<comment type="pathway">
    <text evidence="1">Carbohydrate biosynthesis; gluconeogenesis.</text>
</comment>
<comment type="pathway">
    <text evidence="1">Carbohydrate degradation; glycolysis; D-glyceraldehyde 3-phosphate and glycerone phosphate from D-glucose: step 2/4.</text>
</comment>
<comment type="subcellular location">
    <subcellularLocation>
        <location evidence="1">Cytoplasm</location>
    </subcellularLocation>
</comment>
<comment type="similarity">
    <text evidence="1">Belongs to the GPI family.</text>
</comment>
<comment type="sequence caution" evidence="2">
    <conflict type="erroneous initiation">
        <sequence resource="EMBL-CDS" id="ABE49593"/>
    </conflict>
</comment>
<evidence type="ECO:0000255" key="1">
    <source>
        <dbReference type="HAMAP-Rule" id="MF_00473"/>
    </source>
</evidence>
<evidence type="ECO:0000305" key="2"/>
<gene>
    <name evidence="1" type="primary">pgi</name>
    <name type="ordered locus">Mfla_1325</name>
</gene>
<accession>Q1H1P4</accession>
<dbReference type="EC" id="5.3.1.9" evidence="1"/>
<dbReference type="EMBL" id="CP000284">
    <property type="protein sequence ID" value="ABE49593.1"/>
    <property type="status" value="ALT_INIT"/>
    <property type="molecule type" value="Genomic_DNA"/>
</dbReference>
<dbReference type="RefSeq" id="WP_048811607.1">
    <property type="nucleotide sequence ID" value="NC_007947.1"/>
</dbReference>
<dbReference type="SMR" id="Q1H1P4"/>
<dbReference type="STRING" id="265072.Mfla_1325"/>
<dbReference type="KEGG" id="mfa:Mfla_1325"/>
<dbReference type="eggNOG" id="COG0166">
    <property type="taxonomic scope" value="Bacteria"/>
</dbReference>
<dbReference type="HOGENOM" id="CLU_017947_3_1_4"/>
<dbReference type="OrthoDB" id="140919at2"/>
<dbReference type="UniPathway" id="UPA00109">
    <property type="reaction ID" value="UER00181"/>
</dbReference>
<dbReference type="UniPathway" id="UPA00138"/>
<dbReference type="Proteomes" id="UP000002440">
    <property type="component" value="Chromosome"/>
</dbReference>
<dbReference type="GO" id="GO:0005829">
    <property type="term" value="C:cytosol"/>
    <property type="evidence" value="ECO:0007669"/>
    <property type="project" value="TreeGrafter"/>
</dbReference>
<dbReference type="GO" id="GO:0097367">
    <property type="term" value="F:carbohydrate derivative binding"/>
    <property type="evidence" value="ECO:0007669"/>
    <property type="project" value="InterPro"/>
</dbReference>
<dbReference type="GO" id="GO:0004347">
    <property type="term" value="F:glucose-6-phosphate isomerase activity"/>
    <property type="evidence" value="ECO:0007669"/>
    <property type="project" value="UniProtKB-UniRule"/>
</dbReference>
<dbReference type="GO" id="GO:0048029">
    <property type="term" value="F:monosaccharide binding"/>
    <property type="evidence" value="ECO:0007669"/>
    <property type="project" value="TreeGrafter"/>
</dbReference>
<dbReference type="GO" id="GO:0006094">
    <property type="term" value="P:gluconeogenesis"/>
    <property type="evidence" value="ECO:0007669"/>
    <property type="project" value="UniProtKB-UniRule"/>
</dbReference>
<dbReference type="GO" id="GO:0051156">
    <property type="term" value="P:glucose 6-phosphate metabolic process"/>
    <property type="evidence" value="ECO:0007669"/>
    <property type="project" value="TreeGrafter"/>
</dbReference>
<dbReference type="GO" id="GO:0006096">
    <property type="term" value="P:glycolytic process"/>
    <property type="evidence" value="ECO:0007669"/>
    <property type="project" value="UniProtKB-UniRule"/>
</dbReference>
<dbReference type="CDD" id="cd05015">
    <property type="entry name" value="SIS_PGI_1"/>
    <property type="match status" value="1"/>
</dbReference>
<dbReference type="CDD" id="cd05016">
    <property type="entry name" value="SIS_PGI_2"/>
    <property type="match status" value="1"/>
</dbReference>
<dbReference type="FunFam" id="1.10.1390.10:FF:000001">
    <property type="entry name" value="Glucose-6-phosphate isomerase"/>
    <property type="match status" value="1"/>
</dbReference>
<dbReference type="FunFam" id="3.40.50.10490:FF:000004">
    <property type="entry name" value="Glucose-6-phosphate isomerase"/>
    <property type="match status" value="1"/>
</dbReference>
<dbReference type="Gene3D" id="1.10.1390.10">
    <property type="match status" value="1"/>
</dbReference>
<dbReference type="Gene3D" id="3.40.50.10490">
    <property type="entry name" value="Glucose-6-phosphate isomerase like protein, domain 1"/>
    <property type="match status" value="2"/>
</dbReference>
<dbReference type="HAMAP" id="MF_00473">
    <property type="entry name" value="G6P_isomerase"/>
    <property type="match status" value="1"/>
</dbReference>
<dbReference type="InterPro" id="IPR001672">
    <property type="entry name" value="G6P_Isomerase"/>
</dbReference>
<dbReference type="InterPro" id="IPR023096">
    <property type="entry name" value="G6P_Isomerase_C"/>
</dbReference>
<dbReference type="InterPro" id="IPR018189">
    <property type="entry name" value="Phosphoglucose_isomerase_CS"/>
</dbReference>
<dbReference type="InterPro" id="IPR046348">
    <property type="entry name" value="SIS_dom_sf"/>
</dbReference>
<dbReference type="InterPro" id="IPR035476">
    <property type="entry name" value="SIS_PGI_1"/>
</dbReference>
<dbReference type="InterPro" id="IPR035482">
    <property type="entry name" value="SIS_PGI_2"/>
</dbReference>
<dbReference type="NCBIfam" id="NF001211">
    <property type="entry name" value="PRK00179.1"/>
    <property type="match status" value="1"/>
</dbReference>
<dbReference type="PANTHER" id="PTHR11469">
    <property type="entry name" value="GLUCOSE-6-PHOSPHATE ISOMERASE"/>
    <property type="match status" value="1"/>
</dbReference>
<dbReference type="PANTHER" id="PTHR11469:SF1">
    <property type="entry name" value="GLUCOSE-6-PHOSPHATE ISOMERASE"/>
    <property type="match status" value="1"/>
</dbReference>
<dbReference type="Pfam" id="PF00342">
    <property type="entry name" value="PGI"/>
    <property type="match status" value="1"/>
</dbReference>
<dbReference type="PRINTS" id="PR00662">
    <property type="entry name" value="G6PISOMERASE"/>
</dbReference>
<dbReference type="SUPFAM" id="SSF53697">
    <property type="entry name" value="SIS domain"/>
    <property type="match status" value="1"/>
</dbReference>
<dbReference type="PROSITE" id="PS00765">
    <property type="entry name" value="P_GLUCOSE_ISOMERASE_1"/>
    <property type="match status" value="1"/>
</dbReference>
<dbReference type="PROSITE" id="PS00174">
    <property type="entry name" value="P_GLUCOSE_ISOMERASE_2"/>
    <property type="match status" value="1"/>
</dbReference>
<dbReference type="PROSITE" id="PS51463">
    <property type="entry name" value="P_GLUCOSE_ISOMERASE_3"/>
    <property type="match status" value="1"/>
</dbReference>
<proteinExistence type="inferred from homology"/>
<keyword id="KW-0963">Cytoplasm</keyword>
<keyword id="KW-0312">Gluconeogenesis</keyword>
<keyword id="KW-0324">Glycolysis</keyword>
<keyword id="KW-0413">Isomerase</keyword>
<keyword id="KW-1185">Reference proteome</keyword>
<feature type="chain" id="PRO_0000252630" description="Glucose-6-phosphate isomerase">
    <location>
        <begin position="1"/>
        <end position="555"/>
    </location>
</feature>
<feature type="active site" description="Proton donor" evidence="1">
    <location>
        <position position="353"/>
    </location>
</feature>
<feature type="active site" evidence="1">
    <location>
        <position position="384"/>
    </location>
</feature>
<feature type="active site" evidence="1">
    <location>
        <position position="516"/>
    </location>
</feature>
<reference key="1">
    <citation type="submission" date="2006-03" db="EMBL/GenBank/DDBJ databases">
        <title>Complete sequence of Methylobacillus flagellatus KT.</title>
        <authorList>
            <consortium name="US DOE Joint Genome Institute"/>
            <person name="Copeland A."/>
            <person name="Lucas S."/>
            <person name="Lapidus A."/>
            <person name="Barry K."/>
            <person name="Detter J.C."/>
            <person name="Glavina del Rio T."/>
            <person name="Hammon N."/>
            <person name="Israni S."/>
            <person name="Dalin E."/>
            <person name="Tice H."/>
            <person name="Pitluck S."/>
            <person name="Brettin T."/>
            <person name="Bruce D."/>
            <person name="Han C."/>
            <person name="Tapia R."/>
            <person name="Saunders E."/>
            <person name="Gilna P."/>
            <person name="Schmutz J."/>
            <person name="Larimer F."/>
            <person name="Land M."/>
            <person name="Kyrpides N."/>
            <person name="Anderson I."/>
            <person name="Richardson P."/>
        </authorList>
    </citation>
    <scope>NUCLEOTIDE SEQUENCE [LARGE SCALE GENOMIC DNA]</scope>
    <source>
        <strain>ATCC 51484 / DSM 6875 / VKM B-1610 / KT</strain>
    </source>
</reference>
<protein>
    <recommendedName>
        <fullName evidence="1">Glucose-6-phosphate isomerase</fullName>
        <shortName evidence="1">GPI</shortName>
        <ecNumber evidence="1">5.3.1.9</ecNumber>
    </recommendedName>
    <alternativeName>
        <fullName evidence="1">Phosphoglucose isomerase</fullName>
        <shortName evidence="1">PGI</shortName>
    </alternativeName>
    <alternativeName>
        <fullName evidence="1">Phosphohexose isomerase</fullName>
        <shortName evidence="1">PHI</shortName>
    </alternativeName>
</protein>
<organism>
    <name type="scientific">Methylobacillus flagellatus (strain ATCC 51484 / DSM 6875 / VKM B-1610 / KT)</name>
    <dbReference type="NCBI Taxonomy" id="265072"/>
    <lineage>
        <taxon>Bacteria</taxon>
        <taxon>Pseudomonadati</taxon>
        <taxon>Pseudomonadota</taxon>
        <taxon>Betaproteobacteria</taxon>
        <taxon>Nitrosomonadales</taxon>
        <taxon>Methylophilaceae</taxon>
        <taxon>Methylobacillus</taxon>
    </lineage>
</organism>
<name>G6PI_METFK</name>